<protein>
    <recommendedName>
        <fullName>Pro-neuregulin-4, membrane-bound isoform</fullName>
        <shortName>Pro-NRG4</shortName>
    </recommendedName>
    <component>
        <recommendedName>
            <fullName>Neuregulin-4</fullName>
            <shortName>NRG-4</shortName>
        </recommendedName>
    </component>
</protein>
<dbReference type="EMBL" id="AF083067">
    <property type="protein sequence ID" value="AAD21874.1"/>
    <property type="molecule type" value="mRNA"/>
</dbReference>
<dbReference type="CCDS" id="CCDS52801.1">
    <molecule id="Q9WTX4-1"/>
</dbReference>
<dbReference type="RefSeq" id="NP_114391.1">
    <molecule id="Q9WTX4-1"/>
    <property type="nucleotide sequence ID" value="NM_032002.3"/>
</dbReference>
<dbReference type="RefSeq" id="XP_017169193.1">
    <molecule id="Q9WTX4-1"/>
    <property type="nucleotide sequence ID" value="XM_017313704.2"/>
</dbReference>
<dbReference type="RefSeq" id="XP_017169194.1">
    <molecule id="Q9WTX4-1"/>
    <property type="nucleotide sequence ID" value="XM_017313705.3"/>
</dbReference>
<dbReference type="RefSeq" id="XP_017169195.1">
    <molecule id="Q9WTX4-1"/>
    <property type="nucleotide sequence ID" value="XM_017313706.3"/>
</dbReference>
<dbReference type="SMR" id="Q9WTX4"/>
<dbReference type="FunCoup" id="Q9WTX4">
    <property type="interactions" value="508"/>
</dbReference>
<dbReference type="STRING" id="10090.ENSMUSP00000130929"/>
<dbReference type="GlyCosmos" id="Q9WTX4">
    <property type="glycosylation" value="2 sites, No reported glycans"/>
</dbReference>
<dbReference type="GlyGen" id="Q9WTX4">
    <property type="glycosylation" value="2 sites"/>
</dbReference>
<dbReference type="PaxDb" id="10090-ENSMUSP00000130929"/>
<dbReference type="ProteomicsDB" id="253015">
    <molecule id="Q9WTX4-1"/>
</dbReference>
<dbReference type="Antibodypedia" id="2623">
    <property type="antibodies" value="223 antibodies from 23 providers"/>
</dbReference>
<dbReference type="DNASU" id="83961"/>
<dbReference type="Ensembl" id="ENSMUST00000130158.8">
    <molecule id="Q9WTX4-1"/>
    <property type="protein sequence ID" value="ENSMUSP00000115247.2"/>
    <property type="gene ID" value="ENSMUSG00000032311.18"/>
</dbReference>
<dbReference type="Ensembl" id="ENSMUST00000164721.8">
    <molecule id="Q9WTX4-1"/>
    <property type="protein sequence ID" value="ENSMUSP00000130929.2"/>
    <property type="gene ID" value="ENSMUSG00000032311.18"/>
</dbReference>
<dbReference type="GeneID" id="83961"/>
<dbReference type="KEGG" id="mmu:83961"/>
<dbReference type="UCSC" id="uc009psf.2">
    <molecule id="Q9WTX4-1"/>
    <property type="organism name" value="mouse"/>
</dbReference>
<dbReference type="AGR" id="MGI:1933833"/>
<dbReference type="CTD" id="145957"/>
<dbReference type="MGI" id="MGI:1933833">
    <property type="gene designation" value="Nrg4"/>
</dbReference>
<dbReference type="VEuPathDB" id="HostDB:ENSMUSG00000032311"/>
<dbReference type="eggNOG" id="ENOG502S5EK">
    <property type="taxonomic scope" value="Eukaryota"/>
</dbReference>
<dbReference type="GeneTree" id="ENSGT00390000014815"/>
<dbReference type="InParanoid" id="Q9WTX4"/>
<dbReference type="OMA" id="AHHNHGE"/>
<dbReference type="OrthoDB" id="6162427at2759"/>
<dbReference type="PhylomeDB" id="Q9WTX4"/>
<dbReference type="BioGRID-ORCS" id="83961">
    <property type="hits" value="1 hit in 78 CRISPR screens"/>
</dbReference>
<dbReference type="ChiTaRS" id="Nrg4">
    <property type="organism name" value="mouse"/>
</dbReference>
<dbReference type="PRO" id="PR:Q9WTX4"/>
<dbReference type="Proteomes" id="UP000000589">
    <property type="component" value="Chromosome 9"/>
</dbReference>
<dbReference type="RNAct" id="Q9WTX4">
    <property type="molecule type" value="protein"/>
</dbReference>
<dbReference type="Bgee" id="ENSMUSG00000032311">
    <property type="expression patterns" value="Expressed in animal zygote and 93 other cell types or tissues"/>
</dbReference>
<dbReference type="ExpressionAtlas" id="Q9WTX4">
    <property type="expression patterns" value="baseline and differential"/>
</dbReference>
<dbReference type="GO" id="GO:0005615">
    <property type="term" value="C:extracellular space"/>
    <property type="evidence" value="ECO:0000353"/>
    <property type="project" value="MGI"/>
</dbReference>
<dbReference type="GO" id="GO:0005886">
    <property type="term" value="C:plasma membrane"/>
    <property type="evidence" value="ECO:0007669"/>
    <property type="project" value="UniProtKB-SubCell"/>
</dbReference>
<dbReference type="GO" id="GO:0008083">
    <property type="term" value="F:growth factor activity"/>
    <property type="evidence" value="ECO:0007669"/>
    <property type="project" value="UniProtKB-KW"/>
</dbReference>
<dbReference type="GO" id="GO:0048018">
    <property type="term" value="F:receptor ligand activity"/>
    <property type="evidence" value="ECO:0000353"/>
    <property type="project" value="MGI"/>
</dbReference>
<dbReference type="GO" id="GO:0038138">
    <property type="term" value="P:ERBB4-ERBB4 signaling pathway"/>
    <property type="evidence" value="ECO:0000353"/>
    <property type="project" value="MGI"/>
</dbReference>
<dbReference type="CDD" id="cd00054">
    <property type="entry name" value="EGF_CA"/>
    <property type="match status" value="1"/>
</dbReference>
<dbReference type="FunFam" id="2.10.25.10:FF:000356">
    <property type="entry name" value="pro-neuregulin-4, membrane-bound isoform"/>
    <property type="match status" value="1"/>
</dbReference>
<dbReference type="Gene3D" id="2.10.25.10">
    <property type="entry name" value="Laminin"/>
    <property type="match status" value="1"/>
</dbReference>
<dbReference type="InterPro" id="IPR000742">
    <property type="entry name" value="EGF-like_dom"/>
</dbReference>
<dbReference type="PANTHER" id="PTHR10740:SF10">
    <property type="entry name" value="EPIGEN"/>
    <property type="match status" value="1"/>
</dbReference>
<dbReference type="PANTHER" id="PTHR10740">
    <property type="entry name" value="TRANSFORMING GROWTH FACTOR ALPHA"/>
    <property type="match status" value="1"/>
</dbReference>
<dbReference type="SMART" id="SM00181">
    <property type="entry name" value="EGF"/>
    <property type="match status" value="1"/>
</dbReference>
<dbReference type="SUPFAM" id="SSF57196">
    <property type="entry name" value="EGF/Laminin"/>
    <property type="match status" value="1"/>
</dbReference>
<dbReference type="PROSITE" id="PS00022">
    <property type="entry name" value="EGF_1"/>
    <property type="match status" value="1"/>
</dbReference>
<dbReference type="PROSITE" id="PS50026">
    <property type="entry name" value="EGF_3"/>
    <property type="match status" value="1"/>
</dbReference>
<proteinExistence type="evidence at protein level"/>
<reference key="1">
    <citation type="journal article" date="1999" name="Oncogene">
        <title>Neuregulin-4: a novel growth factor that acts through the ErbB-4 receptor tyrosine kinase.</title>
        <authorList>
            <person name="Harari D."/>
            <person name="Tzahar E."/>
            <person name="Romano J."/>
            <person name="Shelly M."/>
            <person name="Pierce J.H."/>
            <person name="Andrews G.C."/>
            <person name="Yarden Y."/>
        </authorList>
    </citation>
    <scope>NUCLEOTIDE SEQUENCE [MRNA]</scope>
    <scope>FUNCTION</scope>
    <scope>INTERACTION WITH ERBB4</scope>
    <source>
        <strain>C57BL/6J</strain>
        <tissue>Liver</tissue>
    </source>
</reference>
<name>NRG4_MOUSE</name>
<accession>Q9WTX4</accession>
<keyword id="KW-0025">Alternative splicing</keyword>
<keyword id="KW-1003">Cell membrane</keyword>
<keyword id="KW-1015">Disulfide bond</keyword>
<keyword id="KW-0245">EGF-like domain</keyword>
<keyword id="KW-0325">Glycoprotein</keyword>
<keyword id="KW-0339">Growth factor</keyword>
<keyword id="KW-0472">Membrane</keyword>
<keyword id="KW-1185">Reference proteome</keyword>
<keyword id="KW-0964">Secreted</keyword>
<keyword id="KW-0812">Transmembrane</keyword>
<keyword id="KW-1133">Transmembrane helix</keyword>
<organism>
    <name type="scientific">Mus musculus</name>
    <name type="common">Mouse</name>
    <dbReference type="NCBI Taxonomy" id="10090"/>
    <lineage>
        <taxon>Eukaryota</taxon>
        <taxon>Metazoa</taxon>
        <taxon>Chordata</taxon>
        <taxon>Craniata</taxon>
        <taxon>Vertebrata</taxon>
        <taxon>Euteleostomi</taxon>
        <taxon>Mammalia</taxon>
        <taxon>Eutheria</taxon>
        <taxon>Euarchontoglires</taxon>
        <taxon>Glires</taxon>
        <taxon>Rodentia</taxon>
        <taxon>Myomorpha</taxon>
        <taxon>Muroidea</taxon>
        <taxon>Muridae</taxon>
        <taxon>Murinae</taxon>
        <taxon>Mus</taxon>
        <taxon>Mus</taxon>
    </lineage>
</organism>
<sequence>MPTDHEQPCGPRHRSFCLNGGICYVIPTIPSPFCRCIENYTGARCEEVFLPSSSIPSESNLSAAFVVLAVLLTLTIAALCFLCRKGHLQRASSVQCEISLVETNNTRTRHSHREH</sequence>
<evidence type="ECO:0000250" key="1"/>
<evidence type="ECO:0000255" key="2"/>
<evidence type="ECO:0000255" key="3">
    <source>
        <dbReference type="PROSITE-ProRule" id="PRU00076"/>
    </source>
</evidence>
<evidence type="ECO:0000269" key="4">
    <source>
    </source>
</evidence>
<evidence type="ECO:0000305" key="5"/>
<feature type="chain" id="PRO_0000019487" description="Pro-neuregulin-4, membrane-bound isoform">
    <location>
        <begin position="1"/>
        <end position="115"/>
    </location>
</feature>
<feature type="chain" id="PRO_0000019488" description="Neuregulin-4">
    <location>
        <begin position="1"/>
        <end position="61"/>
    </location>
</feature>
<feature type="topological domain" description="Extracellular" evidence="2">
    <location>
        <begin position="1"/>
        <end position="62"/>
    </location>
</feature>
<feature type="transmembrane region" description="Helical; Note=Internal signal sequence" evidence="2">
    <location>
        <begin position="63"/>
        <end position="83"/>
    </location>
</feature>
<feature type="topological domain" description="Cytoplasmic" evidence="2">
    <location>
        <begin position="84"/>
        <end position="115"/>
    </location>
</feature>
<feature type="domain" description="EGF-like" evidence="3">
    <location>
        <begin position="5"/>
        <end position="46"/>
    </location>
</feature>
<feature type="glycosylation site" description="N-linked (GlcNAc...) asparagine" evidence="2">
    <location>
        <position position="39"/>
    </location>
</feature>
<feature type="glycosylation site" description="N-linked (GlcNAc...) asparagine" evidence="2">
    <location>
        <position position="60"/>
    </location>
</feature>
<feature type="disulfide bond" evidence="3">
    <location>
        <begin position="9"/>
        <end position="23"/>
    </location>
</feature>
<feature type="disulfide bond" evidence="3">
    <location>
        <begin position="17"/>
        <end position="34"/>
    </location>
</feature>
<feature type="disulfide bond" evidence="3">
    <location>
        <begin position="36"/>
        <end position="45"/>
    </location>
</feature>
<comment type="function">
    <text evidence="4">Low affinity ligand for the ERBB4 tyrosine kinase receptor. Concomitantly recruits ERBB1 and ERBB2 coreceptors, resulting in ligand-stimulated tyrosine phosphorylation and activation of the ERBB receptors. Does not bind to the ERBB1, ERBB2 and ERBB3 receptors.</text>
</comment>
<comment type="subunit">
    <text evidence="4">Interacts with ERBB4.</text>
</comment>
<comment type="subcellular location">
    <molecule>Pro-neuregulin-4, membrane-bound isoform</molecule>
    <subcellularLocation>
        <location evidence="1">Cell membrane</location>
        <topology evidence="1">Single-pass type I membrane protein</topology>
    </subcellularLocation>
    <text evidence="1">Does not seem to be active.</text>
</comment>
<comment type="subcellular location">
    <molecule>Neuregulin-4</molecule>
    <subcellularLocation>
        <location evidence="1">Secreted</location>
    </subcellularLocation>
</comment>
<comment type="alternative products">
    <event type="alternative splicing"/>
    <isoform>
        <id>Q9WTX4-1</id>
        <name>1</name>
        <sequence type="displayed"/>
    </isoform>
    <text>At least 3 isoforms may be produced.</text>
</comment>
<comment type="tissue specificity">
    <text>Highly expressed in pancreas; weakly expressed in muscle.</text>
</comment>
<comment type="domain">
    <text evidence="1">The cytoplasmic domain may be involved in the regulation of trafficking and proteolytic processing. Regulation of the proteolytic processing involves initial intracellular domain dimerization (By similarity).</text>
</comment>
<comment type="domain">
    <text evidence="1">ERBB receptor binding is elicited entirely by the EGF-like domain.</text>
</comment>
<comment type="PTM">
    <text evidence="1">Proteolytic cleavage close to the plasma membrane on the external face leads to the release of the soluble growth factor form.</text>
</comment>
<comment type="PTM">
    <text evidence="1">Extensive glycosylation precedes the proteolytic cleavage.</text>
</comment>
<comment type="similarity">
    <text evidence="5">Belongs to the neuregulin family.</text>
</comment>
<gene>
    <name type="primary">Nrg4</name>
</gene>